<dbReference type="EMBL" id="AC025783">
    <property type="protein sequence ID" value="AAK20062.1"/>
    <property type="status" value="ALT_INIT"/>
    <property type="molecule type" value="Genomic_DNA"/>
</dbReference>
<dbReference type="EMBL" id="DP000086">
    <property type="protein sequence ID" value="ABB47950.1"/>
    <property type="molecule type" value="Genomic_DNA"/>
</dbReference>
<dbReference type="EMBL" id="AP008216">
    <property type="protein sequence ID" value="BAF27118.1"/>
    <property type="molecule type" value="Genomic_DNA"/>
</dbReference>
<dbReference type="EMBL" id="AP014966">
    <property type="status" value="NOT_ANNOTATED_CDS"/>
    <property type="molecule type" value="Genomic_DNA"/>
</dbReference>
<dbReference type="EMBL" id="CM000145">
    <property type="protein sequence ID" value="EAZ43471.1"/>
    <property type="status" value="ALT_SEQ"/>
    <property type="molecule type" value="Genomic_DNA"/>
</dbReference>
<dbReference type="EMBL" id="AK069472">
    <property type="protein sequence ID" value="BAG91452.1"/>
    <property type="molecule type" value="mRNA"/>
</dbReference>
<dbReference type="RefSeq" id="XP_015614208.1">
    <property type="nucleotide sequence ID" value="XM_015758722.1"/>
</dbReference>
<dbReference type="SMR" id="A3BV82"/>
<dbReference type="FunCoup" id="A3BV82">
    <property type="interactions" value="152"/>
</dbReference>
<dbReference type="STRING" id="39947.A3BV82"/>
<dbReference type="PaxDb" id="39947-A3BV82"/>
<dbReference type="KEGG" id="dosa:Os10g0545000"/>
<dbReference type="eggNOG" id="KOG2662">
    <property type="taxonomic scope" value="Eukaryota"/>
</dbReference>
<dbReference type="InParanoid" id="A3BV82"/>
<dbReference type="OrthoDB" id="10251508at2759"/>
<dbReference type="Proteomes" id="UP000000763">
    <property type="component" value="Chromosome 10"/>
</dbReference>
<dbReference type="Proteomes" id="UP000007752">
    <property type="component" value="Chromosome 8"/>
</dbReference>
<dbReference type="Proteomes" id="UP000059680">
    <property type="component" value="Chromosome 10"/>
</dbReference>
<dbReference type="GO" id="GO:0016020">
    <property type="term" value="C:membrane"/>
    <property type="evidence" value="ECO:0007669"/>
    <property type="project" value="UniProtKB-SubCell"/>
</dbReference>
<dbReference type="GO" id="GO:0015095">
    <property type="term" value="F:magnesium ion transmembrane transporter activity"/>
    <property type="evidence" value="ECO:0000318"/>
    <property type="project" value="GO_Central"/>
</dbReference>
<dbReference type="GO" id="GO:0015693">
    <property type="term" value="P:magnesium ion transport"/>
    <property type="evidence" value="ECO:0000318"/>
    <property type="project" value="GO_Central"/>
</dbReference>
<dbReference type="CDD" id="cd12823">
    <property type="entry name" value="Mrs2_Mfm1p-like"/>
    <property type="match status" value="1"/>
</dbReference>
<dbReference type="FunFam" id="2.40.128.330:FF:000001">
    <property type="entry name" value="Magnesium transporter MRS2-1"/>
    <property type="match status" value="1"/>
</dbReference>
<dbReference type="Gene3D" id="2.40.128.330">
    <property type="match status" value="1"/>
</dbReference>
<dbReference type="Gene3D" id="1.20.58.340">
    <property type="entry name" value="Magnesium transport protein CorA, transmembrane region"/>
    <property type="match status" value="1"/>
</dbReference>
<dbReference type="InterPro" id="IPR039204">
    <property type="entry name" value="MRS2-like"/>
</dbReference>
<dbReference type="PANTHER" id="PTHR13890:SF2">
    <property type="entry name" value="MAGNESIUM TRANSPORTER MRS2-4-RELATED"/>
    <property type="match status" value="1"/>
</dbReference>
<dbReference type="PANTHER" id="PTHR13890">
    <property type="entry name" value="RNA SPLICING PROTEIN MRS2, MITOCHONDRIAL"/>
    <property type="match status" value="1"/>
</dbReference>
<dbReference type="Pfam" id="PF22099">
    <property type="entry name" value="MRS2-like"/>
    <property type="match status" value="2"/>
</dbReference>
<evidence type="ECO:0000250" key="1"/>
<evidence type="ECO:0000255" key="2"/>
<evidence type="ECO:0000256" key="3">
    <source>
        <dbReference type="SAM" id="MobiDB-lite"/>
    </source>
</evidence>
<evidence type="ECO:0000269" key="4">
    <source>
    </source>
</evidence>
<evidence type="ECO:0000303" key="5">
    <source>
    </source>
</evidence>
<evidence type="ECO:0000305" key="6"/>
<gene>
    <name type="primary">MRS2-G</name>
    <name type="ordered locus">Os10g0545000</name>
    <name type="ordered locus">LOC_Os10g39790</name>
    <name type="ORF">OsJ_28078</name>
    <name type="ORF">OSJNBa0001O14.11</name>
</gene>
<keyword id="KW-0025">Alternative splicing</keyword>
<keyword id="KW-0406">Ion transport</keyword>
<keyword id="KW-0460">Magnesium</keyword>
<keyword id="KW-0472">Membrane</keyword>
<keyword id="KW-1185">Reference proteome</keyword>
<keyword id="KW-0812">Transmembrane</keyword>
<keyword id="KW-1133">Transmembrane helix</keyword>
<keyword id="KW-0813">Transport</keyword>
<name>MRS2G_ORYSJ</name>
<protein>
    <recommendedName>
        <fullName>Putative magnesium transporter MRS2-G</fullName>
    </recommendedName>
</protein>
<comment type="function">
    <text evidence="1">Putative magnesium transporter.</text>
</comment>
<comment type="subunit">
    <text evidence="4">Interacts with CYCB2-2.</text>
</comment>
<comment type="subcellular location">
    <subcellularLocation>
        <location evidence="1">Membrane</location>
        <topology evidence="1">Multi-pass membrane protein</topology>
    </subcellularLocation>
</comment>
<comment type="alternative products">
    <event type="alternative splicing"/>
    <isoform>
        <id>A3BV82-1</id>
        <name>1</name>
        <sequence type="displayed"/>
    </isoform>
    <isoform>
        <id>A3BV82-2</id>
        <name>2</name>
        <sequence type="described" ref="VSP_039233 VSP_039234"/>
    </isoform>
</comment>
<comment type="miscellaneous">
    <molecule>Isoform 2</molecule>
    <text evidence="6">May be due to an intron retention.</text>
</comment>
<comment type="similarity">
    <text evidence="6">Belongs to the CorA metal ion transporter (MIT) (TC 1.A.35.5) family.</text>
</comment>
<comment type="caution">
    <text evidence="6">Lacks the GMN motif, which is a conserved feature of the family.</text>
</comment>
<comment type="sequence caution" evidence="6">
    <conflict type="erroneous initiation">
        <sequence resource="EMBL-CDS" id="AAK20062"/>
    </conflict>
    <text>Truncated N-terminus.</text>
</comment>
<comment type="sequence caution" evidence="6">
    <conflict type="erroneous gene model prediction">
        <sequence resource="EMBL-CDS" id="EAZ43471"/>
    </conflict>
</comment>
<accession>A3BV82</accession>
<accession>Q336V7</accession>
<accession>Q9AV41</accession>
<organism>
    <name type="scientific">Oryza sativa subsp. japonica</name>
    <name type="common">Rice</name>
    <dbReference type="NCBI Taxonomy" id="39947"/>
    <lineage>
        <taxon>Eukaryota</taxon>
        <taxon>Viridiplantae</taxon>
        <taxon>Streptophyta</taxon>
        <taxon>Embryophyta</taxon>
        <taxon>Tracheophyta</taxon>
        <taxon>Spermatophyta</taxon>
        <taxon>Magnoliopsida</taxon>
        <taxon>Liliopsida</taxon>
        <taxon>Poales</taxon>
        <taxon>Poaceae</taxon>
        <taxon>BOP clade</taxon>
        <taxon>Oryzoideae</taxon>
        <taxon>Oryzeae</taxon>
        <taxon>Oryzinae</taxon>
        <taxon>Oryza</taxon>
        <taxon>Oryza sativa</taxon>
    </lineage>
</organism>
<reference key="1">
    <citation type="journal article" date="2003" name="Science">
        <title>In-depth view of structure, activity, and evolution of rice chromosome 10.</title>
        <authorList>
            <person name="Yu Y."/>
            <person name="Rambo T."/>
            <person name="Currie J."/>
            <person name="Saski C."/>
            <person name="Kim H.-R."/>
            <person name="Collura K."/>
            <person name="Thompson S."/>
            <person name="Simmons J."/>
            <person name="Yang T.-J."/>
            <person name="Nah G."/>
            <person name="Patel A.J."/>
            <person name="Thurmond S."/>
            <person name="Henry D."/>
            <person name="Oates R."/>
            <person name="Palmer M."/>
            <person name="Pries G."/>
            <person name="Gibson J."/>
            <person name="Anderson H."/>
            <person name="Paradkar M."/>
            <person name="Crane L."/>
            <person name="Dale J."/>
            <person name="Carver M.B."/>
            <person name="Wood T."/>
            <person name="Frisch D."/>
            <person name="Engler F."/>
            <person name="Soderlund C."/>
            <person name="Palmer L.E."/>
            <person name="Teytelman L."/>
            <person name="Nascimento L."/>
            <person name="De la Bastide M."/>
            <person name="Spiegel L."/>
            <person name="Ware D."/>
            <person name="O'Shaughnessy A."/>
            <person name="Dike S."/>
            <person name="Dedhia N."/>
            <person name="Preston R."/>
            <person name="Huang E."/>
            <person name="Ferraro K."/>
            <person name="Kuit K."/>
            <person name="Miller B."/>
            <person name="Zutavern T."/>
            <person name="Katzenberger F."/>
            <person name="Muller S."/>
            <person name="Balija V."/>
            <person name="Martienssen R.A."/>
            <person name="Stein L."/>
            <person name="Minx P."/>
            <person name="Johnson D."/>
            <person name="Cordum H."/>
            <person name="Mardis E."/>
            <person name="Cheng Z."/>
            <person name="Jiang J."/>
            <person name="Wilson R."/>
            <person name="McCombie W.R."/>
            <person name="Wing R.A."/>
            <person name="Yuan Q."/>
            <person name="Ouyang S."/>
            <person name="Liu J."/>
            <person name="Jones K.M."/>
            <person name="Gansberger K."/>
            <person name="Moffat K."/>
            <person name="Hill J."/>
            <person name="Tsitrin T."/>
            <person name="Overton L."/>
            <person name="Bera J."/>
            <person name="Kim M."/>
            <person name="Jin S."/>
            <person name="Tallon L."/>
            <person name="Ciecko A."/>
            <person name="Pai G."/>
            <person name="Van Aken S."/>
            <person name="Utterback T."/>
            <person name="Reidmuller S."/>
            <person name="Bormann J."/>
            <person name="Feldblyum T."/>
            <person name="Hsiao J."/>
            <person name="Zismann V."/>
            <person name="Blunt S."/>
            <person name="de Vazeille A.R."/>
            <person name="Shaffer T."/>
            <person name="Koo H."/>
            <person name="Suh B."/>
            <person name="Yang Q."/>
            <person name="Haas B."/>
            <person name="Peterson J."/>
            <person name="Pertea M."/>
            <person name="Volfovsky N."/>
            <person name="Wortman J."/>
            <person name="White O."/>
            <person name="Salzberg S.L."/>
            <person name="Fraser C.M."/>
            <person name="Buell C.R."/>
            <person name="Messing J."/>
            <person name="Song R."/>
            <person name="Fuks G."/>
            <person name="Llaca V."/>
            <person name="Kovchak S."/>
            <person name="Young S."/>
            <person name="Bowers J.E."/>
            <person name="Paterson A.H."/>
            <person name="Johns M.A."/>
            <person name="Mao L."/>
            <person name="Pan H."/>
            <person name="Dean R.A."/>
        </authorList>
    </citation>
    <scope>NUCLEOTIDE SEQUENCE [LARGE SCALE GENOMIC DNA]</scope>
    <source>
        <strain>cv. Nipponbare</strain>
    </source>
</reference>
<reference key="2">
    <citation type="journal article" date="2005" name="Nature">
        <title>The map-based sequence of the rice genome.</title>
        <authorList>
            <consortium name="International rice genome sequencing project (IRGSP)"/>
        </authorList>
    </citation>
    <scope>NUCLEOTIDE SEQUENCE [LARGE SCALE GENOMIC DNA]</scope>
    <source>
        <strain>cv. Nipponbare</strain>
    </source>
</reference>
<reference key="3">
    <citation type="journal article" date="2008" name="Nucleic Acids Res.">
        <title>The rice annotation project database (RAP-DB): 2008 update.</title>
        <authorList>
            <consortium name="The rice annotation project (RAP)"/>
        </authorList>
    </citation>
    <scope>GENOME REANNOTATION</scope>
    <source>
        <strain>cv. Nipponbare</strain>
    </source>
</reference>
<reference key="4">
    <citation type="journal article" date="2013" name="Rice">
        <title>Improvement of the Oryza sativa Nipponbare reference genome using next generation sequence and optical map data.</title>
        <authorList>
            <person name="Kawahara Y."/>
            <person name="de la Bastide M."/>
            <person name="Hamilton J.P."/>
            <person name="Kanamori H."/>
            <person name="McCombie W.R."/>
            <person name="Ouyang S."/>
            <person name="Schwartz D.C."/>
            <person name="Tanaka T."/>
            <person name="Wu J."/>
            <person name="Zhou S."/>
            <person name="Childs K.L."/>
            <person name="Davidson R.M."/>
            <person name="Lin H."/>
            <person name="Quesada-Ocampo L."/>
            <person name="Vaillancourt B."/>
            <person name="Sakai H."/>
            <person name="Lee S.S."/>
            <person name="Kim J."/>
            <person name="Numa H."/>
            <person name="Itoh T."/>
            <person name="Buell C.R."/>
            <person name="Matsumoto T."/>
        </authorList>
    </citation>
    <scope>GENOME REANNOTATION</scope>
    <source>
        <strain>cv. Nipponbare</strain>
    </source>
</reference>
<reference key="5">
    <citation type="journal article" date="2005" name="PLoS Biol.">
        <title>The genomes of Oryza sativa: a history of duplications.</title>
        <authorList>
            <person name="Yu J."/>
            <person name="Wang J."/>
            <person name="Lin W."/>
            <person name="Li S."/>
            <person name="Li H."/>
            <person name="Zhou J."/>
            <person name="Ni P."/>
            <person name="Dong W."/>
            <person name="Hu S."/>
            <person name="Zeng C."/>
            <person name="Zhang J."/>
            <person name="Zhang Y."/>
            <person name="Li R."/>
            <person name="Xu Z."/>
            <person name="Li S."/>
            <person name="Li X."/>
            <person name="Zheng H."/>
            <person name="Cong L."/>
            <person name="Lin L."/>
            <person name="Yin J."/>
            <person name="Geng J."/>
            <person name="Li G."/>
            <person name="Shi J."/>
            <person name="Liu J."/>
            <person name="Lv H."/>
            <person name="Li J."/>
            <person name="Wang J."/>
            <person name="Deng Y."/>
            <person name="Ran L."/>
            <person name="Shi X."/>
            <person name="Wang X."/>
            <person name="Wu Q."/>
            <person name="Li C."/>
            <person name="Ren X."/>
            <person name="Wang J."/>
            <person name="Wang X."/>
            <person name="Li D."/>
            <person name="Liu D."/>
            <person name="Zhang X."/>
            <person name="Ji Z."/>
            <person name="Zhao W."/>
            <person name="Sun Y."/>
            <person name="Zhang Z."/>
            <person name="Bao J."/>
            <person name="Han Y."/>
            <person name="Dong L."/>
            <person name="Ji J."/>
            <person name="Chen P."/>
            <person name="Wu S."/>
            <person name="Liu J."/>
            <person name="Xiao Y."/>
            <person name="Bu D."/>
            <person name="Tan J."/>
            <person name="Yang L."/>
            <person name="Ye C."/>
            <person name="Zhang J."/>
            <person name="Xu J."/>
            <person name="Zhou Y."/>
            <person name="Yu Y."/>
            <person name="Zhang B."/>
            <person name="Zhuang S."/>
            <person name="Wei H."/>
            <person name="Liu B."/>
            <person name="Lei M."/>
            <person name="Yu H."/>
            <person name="Li Y."/>
            <person name="Xu H."/>
            <person name="Wei S."/>
            <person name="He X."/>
            <person name="Fang L."/>
            <person name="Zhang Z."/>
            <person name="Zhang Y."/>
            <person name="Huang X."/>
            <person name="Su Z."/>
            <person name="Tong W."/>
            <person name="Li J."/>
            <person name="Tong Z."/>
            <person name="Li S."/>
            <person name="Ye J."/>
            <person name="Wang L."/>
            <person name="Fang L."/>
            <person name="Lei T."/>
            <person name="Chen C.-S."/>
            <person name="Chen H.-C."/>
            <person name="Xu Z."/>
            <person name="Li H."/>
            <person name="Huang H."/>
            <person name="Zhang F."/>
            <person name="Xu H."/>
            <person name="Li N."/>
            <person name="Zhao C."/>
            <person name="Li S."/>
            <person name="Dong L."/>
            <person name="Huang Y."/>
            <person name="Li L."/>
            <person name="Xi Y."/>
            <person name="Qi Q."/>
            <person name="Li W."/>
            <person name="Zhang B."/>
            <person name="Hu W."/>
            <person name="Zhang Y."/>
            <person name="Tian X."/>
            <person name="Jiao Y."/>
            <person name="Liang X."/>
            <person name="Jin J."/>
            <person name="Gao L."/>
            <person name="Zheng W."/>
            <person name="Hao B."/>
            <person name="Liu S.-M."/>
            <person name="Wang W."/>
            <person name="Yuan L."/>
            <person name="Cao M."/>
            <person name="McDermott J."/>
            <person name="Samudrala R."/>
            <person name="Wang J."/>
            <person name="Wong G.K.-S."/>
            <person name="Yang H."/>
        </authorList>
    </citation>
    <scope>NUCLEOTIDE SEQUENCE [LARGE SCALE GENOMIC DNA]</scope>
    <source>
        <strain>cv. Nipponbare</strain>
    </source>
</reference>
<reference key="6">
    <citation type="journal article" date="2003" name="Science">
        <title>Collection, mapping, and annotation of over 28,000 cDNA clones from japonica rice.</title>
        <authorList>
            <consortium name="The rice full-length cDNA consortium"/>
        </authorList>
    </citation>
    <scope>NUCLEOTIDE SEQUENCE [LARGE SCALE MRNA] (ISOFORM 2)</scope>
    <source>
        <strain>cv. Nipponbare</strain>
    </source>
</reference>
<reference key="7">
    <citation type="journal article" date="2003" name="Plant Mol. Biol.">
        <title>Identification of rice (Oryza sativa) proteins linked to the cyclin-mediated regulation of the cell cycle.</title>
        <authorList>
            <person name="Cooper B."/>
            <person name="Hutchison D."/>
            <person name="Park S."/>
            <person name="Guimil S."/>
            <person name="Luginbuehl P."/>
            <person name="Ellero C."/>
            <person name="Goff S.A."/>
            <person name="Glazebrook J."/>
        </authorList>
    </citation>
    <scope>INTERACTION WITH CYCB2-2</scope>
</reference>
<reference key="8">
    <citation type="journal article" date="2009" name="Plant Cell">
        <title>A root-expressed magnesium transporter of the MRS2/MGT gene family in Arabidopsis thaliana allows for growth in low-Mg2+ environments.</title>
        <authorList>
            <person name="Gebert M."/>
            <person name="Meschenmoser K."/>
            <person name="Svidova S."/>
            <person name="Weghuber J."/>
            <person name="Schweyen R."/>
            <person name="Eifler K."/>
            <person name="Lenz H."/>
            <person name="Weyand K."/>
            <person name="Knoop V."/>
        </authorList>
    </citation>
    <scope>GENE FAMILY</scope>
</reference>
<feature type="chain" id="PRO_0000394277" description="Putative magnesium transporter MRS2-G">
    <location>
        <begin position="1"/>
        <end position="468"/>
    </location>
</feature>
<feature type="transmembrane region" description="Helical" evidence="2">
    <location>
        <begin position="402"/>
        <end position="422"/>
    </location>
</feature>
<feature type="transmembrane region" description="Helical" evidence="2">
    <location>
        <begin position="437"/>
        <end position="457"/>
    </location>
</feature>
<feature type="region of interest" description="Disordered" evidence="3">
    <location>
        <begin position="1"/>
        <end position="76"/>
    </location>
</feature>
<feature type="region of interest" description="Disordered" evidence="3">
    <location>
        <begin position="183"/>
        <end position="204"/>
    </location>
</feature>
<feature type="compositionally biased region" description="Low complexity" evidence="3">
    <location>
        <begin position="14"/>
        <end position="23"/>
    </location>
</feature>
<feature type="compositionally biased region" description="Low complexity" evidence="3">
    <location>
        <begin position="31"/>
        <end position="45"/>
    </location>
</feature>
<feature type="compositionally biased region" description="Pro residues" evidence="3">
    <location>
        <begin position="46"/>
        <end position="67"/>
    </location>
</feature>
<feature type="compositionally biased region" description="Basic and acidic residues" evidence="3">
    <location>
        <begin position="187"/>
        <end position="201"/>
    </location>
</feature>
<feature type="splice variant" id="VSP_039233" description="In isoform 2." evidence="5">
    <location>
        <begin position="1"/>
        <end position="125"/>
    </location>
</feature>
<feature type="splice variant" id="VSP_039234" description="In isoform 2." evidence="5">
    <original>SSSIL</original>
    <variation>MFNCA</variation>
    <location>
        <begin position="126"/>
        <end position="130"/>
    </location>
</feature>
<sequence length="468" mass="51671">MGRRSGGRKLPFFASNASTSSSTKRTRSARRLPSLTRPRASSSPSPASPSPPPPSASHPAPPSPPLAVSPAGAGKVGKKKAGARLWMRLDRWGVSETLHLDKGSIIRRAGLPPRDLRILGPVFSDSSSILAREKAMVINLEFIRAIVTADEILLLDPLTIDVIPFVEQLTHHLPLKNLVCGNGQPGGDDHGEKHDDSHGDQVPRLNEATGAEHELPFEFQVLELALETVCSSFDVNVSGLERRATPVLEELTKNVSTRNLDRVRTLKSDLTRLLAHVQKVRDEIEHLLDDNEDMAHLYLTRKQLQNQQVEALISSAASNSIVPGGTSLSRLNNSFRRSVSIATSMHLDNDVEDLEMLLEAYFMQLDGIRNRILSVREYIDDTEDYVNIQLDNQRNELIQLQLTLTIASFGIAVNTFIAGAFAMNIQSKLYSIDDGSFFWPFVGGTSSGCFMICIVLLWYARWKKLLGP</sequence>
<proteinExistence type="evidence at protein level"/>